<feature type="signal peptide" evidence="6">
    <location>
        <begin position="1"/>
        <end position="23"/>
    </location>
</feature>
<feature type="propeptide" id="PRO_0000445130" evidence="10">
    <location>
        <begin position="24"/>
        <end position="54"/>
    </location>
</feature>
<feature type="peptide" id="PRO_5012568971" description="Contryphan-Fr1" evidence="8">
    <location>
        <begin position="55"/>
        <end position="62"/>
    </location>
</feature>
<feature type="region of interest" description="Disordered" evidence="7">
    <location>
        <begin position="22"/>
        <end position="52"/>
    </location>
</feature>
<feature type="compositionally biased region" description="Basic and acidic residues" evidence="7">
    <location>
        <begin position="23"/>
        <end position="40"/>
    </location>
</feature>
<feature type="modified residue" description="4-hydroxyproline" evidence="8">
    <location>
        <position position="57"/>
    </location>
</feature>
<feature type="modified residue" description="D-tryptophan" evidence="11">
    <location>
        <position position="58"/>
    </location>
</feature>
<feature type="modified residue" description="Cysteine amide" evidence="8">
    <location>
        <position position="62"/>
    </location>
</feature>
<feature type="disulfide bond" evidence="8">
    <location>
        <begin position="56"/>
        <end position="62"/>
    </location>
</feature>
<keyword id="KW-0027">Amidation</keyword>
<keyword id="KW-0208">D-amino acid</keyword>
<keyword id="KW-1015">Disulfide bond</keyword>
<keyword id="KW-0379">Hydroxylation</keyword>
<keyword id="KW-0872">Ion channel impairing toxin</keyword>
<keyword id="KW-0528">Neurotoxin</keyword>
<keyword id="KW-0964">Secreted</keyword>
<keyword id="KW-0732">Signal</keyword>
<keyword id="KW-0800">Toxin</keyword>
<protein>
    <recommendedName>
        <fullName evidence="10">Contryphan-Fr1</fullName>
    </recommendedName>
    <alternativeName>
        <fullName evidence="9">Fr975</fullName>
    </alternativeName>
</protein>
<proteinExistence type="evidence at protein level"/>
<comment type="function">
    <text evidence="1 2 4 5">Its target is unknown, but this toxin may modulate voltage-activated calcium channels (Cav) or calcium-dependent potassium channels (KCa).</text>
</comment>
<comment type="subcellular location">
    <subcellularLocation>
        <location evidence="8">Secreted</location>
    </subcellularLocation>
</comment>
<comment type="tissue specificity">
    <text evidence="11">Expressed by the venom duct.</text>
</comment>
<comment type="domain">
    <text evidence="10">The cysteine framework is C-C.</text>
</comment>
<comment type="mass spectrometry">
    <text>Monoisotopic mass.</text>
</comment>
<comment type="miscellaneous">
    <text evidence="3">Exists in two forms, due to cis-trans isomerization at 56-Cys-hydroxyPro-57. The cis conformation is the major form.</text>
</comment>
<comment type="similarity">
    <text evidence="10">Belongs to the O2 superfamily. Contryphan family.</text>
</comment>
<accession>A0A1P8NVT3</accession>
<name>COW_CONFG</name>
<organism>
    <name type="scientific">Conus frigidus</name>
    <name type="common">Frigid cone</name>
    <dbReference type="NCBI Taxonomy" id="101755"/>
    <lineage>
        <taxon>Eukaryota</taxon>
        <taxon>Metazoa</taxon>
        <taxon>Spiralia</taxon>
        <taxon>Lophotrochozoa</taxon>
        <taxon>Mollusca</taxon>
        <taxon>Gastropoda</taxon>
        <taxon>Caenogastropoda</taxon>
        <taxon>Neogastropoda</taxon>
        <taxon>Conoidea</taxon>
        <taxon>Conidae</taxon>
        <taxon>Conus</taxon>
        <taxon>Virgiconus</taxon>
    </lineage>
</organism>
<dbReference type="EMBL" id="KX289878">
    <property type="protein sequence ID" value="APX52855.1"/>
    <property type="molecule type" value="mRNA"/>
</dbReference>
<dbReference type="ConoServer" id="9756">
    <property type="toxin name" value="Contryphan-Fr1 precursor"/>
</dbReference>
<dbReference type="GO" id="GO:0005576">
    <property type="term" value="C:extracellular region"/>
    <property type="evidence" value="ECO:0007669"/>
    <property type="project" value="UniProtKB-SubCell"/>
</dbReference>
<dbReference type="GO" id="GO:0008200">
    <property type="term" value="F:ion channel inhibitor activity"/>
    <property type="evidence" value="ECO:0007669"/>
    <property type="project" value="InterPro"/>
</dbReference>
<dbReference type="GO" id="GO:0090729">
    <property type="term" value="F:toxin activity"/>
    <property type="evidence" value="ECO:0007669"/>
    <property type="project" value="UniProtKB-KW"/>
</dbReference>
<dbReference type="InterPro" id="IPR004214">
    <property type="entry name" value="Conotoxin"/>
</dbReference>
<dbReference type="InterPro" id="IPR011062">
    <property type="entry name" value="Contryphan_CS"/>
</dbReference>
<dbReference type="Pfam" id="PF02950">
    <property type="entry name" value="Conotoxin"/>
    <property type="match status" value="1"/>
</dbReference>
<dbReference type="PROSITE" id="PS60027">
    <property type="entry name" value="CONTRYPHAN"/>
    <property type="match status" value="1"/>
</dbReference>
<sequence>MGKLTILVLVAAVLLSTQVMVQGDRDQPADRDAVPRDDKPGGTSGKFMNVLRRSGCPWDPWCG</sequence>
<evidence type="ECO:0000250" key="1">
    <source>
        <dbReference type="UniProtKB" id="P0C248"/>
    </source>
</evidence>
<evidence type="ECO:0000250" key="2">
    <source>
        <dbReference type="UniProtKB" id="P0C250"/>
    </source>
</evidence>
<evidence type="ECO:0000250" key="3">
    <source>
        <dbReference type="UniProtKB" id="P58787"/>
    </source>
</evidence>
<evidence type="ECO:0000250" key="4">
    <source>
        <dbReference type="UniProtKB" id="P62903"/>
    </source>
</evidence>
<evidence type="ECO:0000250" key="5">
    <source>
        <dbReference type="UniProtKB" id="P83047"/>
    </source>
</evidence>
<evidence type="ECO:0000255" key="6"/>
<evidence type="ECO:0000256" key="7">
    <source>
        <dbReference type="SAM" id="MobiDB-lite"/>
    </source>
</evidence>
<evidence type="ECO:0000269" key="8">
    <source>
    </source>
</evidence>
<evidence type="ECO:0000303" key="9">
    <source>
    </source>
</evidence>
<evidence type="ECO:0000305" key="10"/>
<evidence type="ECO:0000305" key="11">
    <source>
    </source>
</evidence>
<reference key="1">
    <citation type="journal article" date="2017" name="J. Proteome Res.">
        <title>Contryphan genes and mature peptides in the venom of nine cone snail species by transcriptomic and mass spectrometric analysis.</title>
        <authorList>
            <person name="Vijayasarathy M."/>
            <person name="Basheer S.M."/>
            <person name="Franklin J.B."/>
            <person name="Balaram P."/>
        </authorList>
    </citation>
    <scope>NUCLEOTIDE SEQUENCE [MRNA]</scope>
    <scope>IDENTIFICATION BY MASS SPECTROMETRY</scope>
    <scope>MASS SPECTROMETRY</scope>
    <scope>HYDROXYLATION AT PRO-57</scope>
    <scope>D-AMINO ACID AT TRP-58</scope>
    <scope>AMIDATION AT CYS-62</scope>
    <scope>SUBCELLULAR LOCATION</scope>
    <scope>DISULFIDE BOND</scope>
    <source>
        <tissue>Venom</tissue>
        <tissue>Venom duct</tissue>
    </source>
</reference>